<dbReference type="EC" id="2.7.11.1" evidence="1"/>
<dbReference type="EMBL" id="CP000560">
    <property type="protein sequence ID" value="ABS72905.1"/>
    <property type="molecule type" value="Genomic_DNA"/>
</dbReference>
<dbReference type="RefSeq" id="WP_007609591.1">
    <property type="nucleotide sequence ID" value="NC_009725.2"/>
</dbReference>
<dbReference type="SMR" id="A7Z1M9"/>
<dbReference type="GeneID" id="93079639"/>
<dbReference type="KEGG" id="bay:RBAM_005060"/>
<dbReference type="HOGENOM" id="CLU_090336_11_1_9"/>
<dbReference type="Proteomes" id="UP000001120">
    <property type="component" value="Chromosome"/>
</dbReference>
<dbReference type="GO" id="GO:0005524">
    <property type="term" value="F:ATP binding"/>
    <property type="evidence" value="ECO:0007669"/>
    <property type="project" value="UniProtKB-KW"/>
</dbReference>
<dbReference type="GO" id="GO:0106310">
    <property type="term" value="F:protein serine kinase activity"/>
    <property type="evidence" value="ECO:0007669"/>
    <property type="project" value="RHEA"/>
</dbReference>
<dbReference type="GO" id="GO:0004674">
    <property type="term" value="F:protein serine/threonine kinase activity"/>
    <property type="evidence" value="ECO:0007669"/>
    <property type="project" value="UniProtKB-KW"/>
</dbReference>
<dbReference type="GO" id="GO:0016989">
    <property type="term" value="F:sigma factor antagonist activity"/>
    <property type="evidence" value="ECO:0007669"/>
    <property type="project" value="InterPro"/>
</dbReference>
<dbReference type="CDD" id="cd16936">
    <property type="entry name" value="HATPase_RsbW-like"/>
    <property type="match status" value="1"/>
</dbReference>
<dbReference type="Gene3D" id="3.30.565.10">
    <property type="entry name" value="Histidine kinase-like ATPase, C-terminal domain"/>
    <property type="match status" value="1"/>
</dbReference>
<dbReference type="HAMAP" id="MF_00638">
    <property type="entry name" value="Anti_sigma_B"/>
    <property type="match status" value="1"/>
</dbReference>
<dbReference type="InterPro" id="IPR050267">
    <property type="entry name" value="Anti-sigma-factor_SerPK"/>
</dbReference>
<dbReference type="InterPro" id="IPR036890">
    <property type="entry name" value="HATPase_C_sf"/>
</dbReference>
<dbReference type="InterPro" id="IPR010193">
    <property type="entry name" value="RsbW"/>
</dbReference>
<dbReference type="NCBIfam" id="NF003144">
    <property type="entry name" value="PRK04069.1"/>
    <property type="match status" value="1"/>
</dbReference>
<dbReference type="NCBIfam" id="TIGR01924">
    <property type="entry name" value="rsbW_low_gc"/>
    <property type="match status" value="1"/>
</dbReference>
<dbReference type="PANTHER" id="PTHR35526">
    <property type="entry name" value="ANTI-SIGMA-F FACTOR RSBW-RELATED"/>
    <property type="match status" value="1"/>
</dbReference>
<dbReference type="PANTHER" id="PTHR35526:SF9">
    <property type="entry name" value="SERINE-PROTEIN KINASE RSBW"/>
    <property type="match status" value="1"/>
</dbReference>
<dbReference type="Pfam" id="PF13581">
    <property type="entry name" value="HATPase_c_2"/>
    <property type="match status" value="1"/>
</dbReference>
<dbReference type="SUPFAM" id="SSF55874">
    <property type="entry name" value="ATPase domain of HSP90 chaperone/DNA topoisomerase II/histidine kinase"/>
    <property type="match status" value="1"/>
</dbReference>
<evidence type="ECO:0000255" key="1">
    <source>
        <dbReference type="HAMAP-Rule" id="MF_00638"/>
    </source>
</evidence>
<organism>
    <name type="scientific">Bacillus velezensis (strain DSM 23117 / BGSC 10A6 / LMG 26770 / FZB42)</name>
    <name type="common">Bacillus amyloliquefaciens subsp. plantarum</name>
    <dbReference type="NCBI Taxonomy" id="326423"/>
    <lineage>
        <taxon>Bacteria</taxon>
        <taxon>Bacillati</taxon>
        <taxon>Bacillota</taxon>
        <taxon>Bacilli</taxon>
        <taxon>Bacillales</taxon>
        <taxon>Bacillaceae</taxon>
        <taxon>Bacillus</taxon>
        <taxon>Bacillus amyloliquefaciens group</taxon>
    </lineage>
</organism>
<gene>
    <name evidence="1" type="primary">rsbW</name>
    <name type="ordered locus">RBAM_005060</name>
</gene>
<protein>
    <recommendedName>
        <fullName evidence="1">Serine-protein kinase RsbW</fullName>
        <ecNumber evidence="1">2.7.11.1</ecNumber>
    </recommendedName>
    <alternativeName>
        <fullName evidence="1">Anti-sigma-B factor</fullName>
    </alternativeName>
    <alternativeName>
        <fullName evidence="1">Sigma-B negative effector RsbW</fullName>
    </alternativeName>
</protein>
<comment type="function">
    <text evidence="1">Negative regulator of sigma-B activity. Phosphorylates and inactivates its specific antagonist protein, RsbV. Upon phosphorylation of RsbV, RsbW is released and binds to sigma-B, thereby blocking its ability to form an RNA polymerase holoenzyme (E-sigma-B).</text>
</comment>
<comment type="catalytic activity">
    <reaction evidence="1">
        <text>L-seryl-[protein] + ATP = O-phospho-L-seryl-[protein] + ADP + H(+)</text>
        <dbReference type="Rhea" id="RHEA:17989"/>
        <dbReference type="Rhea" id="RHEA-COMP:9863"/>
        <dbReference type="Rhea" id="RHEA-COMP:11604"/>
        <dbReference type="ChEBI" id="CHEBI:15378"/>
        <dbReference type="ChEBI" id="CHEBI:29999"/>
        <dbReference type="ChEBI" id="CHEBI:30616"/>
        <dbReference type="ChEBI" id="CHEBI:83421"/>
        <dbReference type="ChEBI" id="CHEBI:456216"/>
        <dbReference type="EC" id="2.7.11.1"/>
    </reaction>
</comment>
<comment type="catalytic activity">
    <reaction evidence="1">
        <text>L-threonyl-[protein] + ATP = O-phospho-L-threonyl-[protein] + ADP + H(+)</text>
        <dbReference type="Rhea" id="RHEA:46608"/>
        <dbReference type="Rhea" id="RHEA-COMP:11060"/>
        <dbReference type="Rhea" id="RHEA-COMP:11605"/>
        <dbReference type="ChEBI" id="CHEBI:15378"/>
        <dbReference type="ChEBI" id="CHEBI:30013"/>
        <dbReference type="ChEBI" id="CHEBI:30616"/>
        <dbReference type="ChEBI" id="CHEBI:61977"/>
        <dbReference type="ChEBI" id="CHEBI:456216"/>
        <dbReference type="EC" id="2.7.11.1"/>
    </reaction>
</comment>
<comment type="similarity">
    <text evidence="1">Belongs to the anti-sigma-factor family.</text>
</comment>
<keyword id="KW-0067">ATP-binding</keyword>
<keyword id="KW-0418">Kinase</keyword>
<keyword id="KW-0547">Nucleotide-binding</keyword>
<keyword id="KW-0723">Serine/threonine-protein kinase</keyword>
<keyword id="KW-0808">Transferase</keyword>
<accession>A7Z1M9</accession>
<proteinExistence type="inferred from homology"/>
<feature type="chain" id="PRO_1000061446" description="Serine-protein kinase RsbW">
    <location>
        <begin position="1"/>
        <end position="160"/>
    </location>
</feature>
<sequence>MSTSVDYIEMKIPAEPEYVGIVRLTLSGVASRMGYTYDDIEDLKIAVSEACTNAVQHAYNDENKGEVSVRFGVFEDRLEVIVADQGDSFDFDQKQQDLGPYTPSHTVDQLSEGGLGLYLMETLMDEVKVQSNSGVTVAMTKYLNGERVDHGTTIKNYETN</sequence>
<name>RSBW_BACVZ</name>
<reference key="1">
    <citation type="journal article" date="2007" name="Nat. Biotechnol.">
        <title>Comparative analysis of the complete genome sequence of the plant growth-promoting bacterium Bacillus amyloliquefaciens FZB42.</title>
        <authorList>
            <person name="Chen X.H."/>
            <person name="Koumoutsi A."/>
            <person name="Scholz R."/>
            <person name="Eisenreich A."/>
            <person name="Schneider K."/>
            <person name="Heinemeyer I."/>
            <person name="Morgenstern B."/>
            <person name="Voss B."/>
            <person name="Hess W.R."/>
            <person name="Reva O."/>
            <person name="Junge H."/>
            <person name="Voigt B."/>
            <person name="Jungblut P.R."/>
            <person name="Vater J."/>
            <person name="Suessmuth R."/>
            <person name="Liesegang H."/>
            <person name="Strittmatter A."/>
            <person name="Gottschalk G."/>
            <person name="Borriss R."/>
        </authorList>
    </citation>
    <scope>NUCLEOTIDE SEQUENCE [LARGE SCALE GENOMIC DNA]</scope>
    <source>
        <strain>DSM 23117 / BGSC 10A6 / LMG 26770 / FZB42</strain>
    </source>
</reference>